<accession>Q1CCT4</accession>
<accession>D1Q2N1</accession>
<reference key="1">
    <citation type="journal article" date="2006" name="J. Bacteriol.">
        <title>Complete genome sequence of Yersinia pestis strains Antiqua and Nepal516: evidence of gene reduction in an emerging pathogen.</title>
        <authorList>
            <person name="Chain P.S.G."/>
            <person name="Hu P."/>
            <person name="Malfatti S.A."/>
            <person name="Radnedge L."/>
            <person name="Larimer F."/>
            <person name="Vergez L.M."/>
            <person name="Worsham P."/>
            <person name="Chu M.C."/>
            <person name="Andersen G.L."/>
        </authorList>
    </citation>
    <scope>NUCLEOTIDE SEQUENCE [LARGE SCALE GENOMIC DNA]</scope>
    <source>
        <strain>Nepal516</strain>
    </source>
</reference>
<reference key="2">
    <citation type="submission" date="2009-04" db="EMBL/GenBank/DDBJ databases">
        <title>Yersinia pestis Nepal516A whole genome shotgun sequencing project.</title>
        <authorList>
            <person name="Plunkett G. III"/>
            <person name="Anderson B.D."/>
            <person name="Baumler D.J."/>
            <person name="Burland V."/>
            <person name="Cabot E.L."/>
            <person name="Glasner J.D."/>
            <person name="Mau B."/>
            <person name="Neeno-Eckwall E."/>
            <person name="Perna N.T."/>
            <person name="Munk A.C."/>
            <person name="Tapia R."/>
            <person name="Green L.D."/>
            <person name="Rogers Y.C."/>
            <person name="Detter J.C."/>
            <person name="Bruce D.C."/>
            <person name="Brettin T.S."/>
        </authorList>
    </citation>
    <scope>NUCLEOTIDE SEQUENCE [LARGE SCALE GENOMIC DNA]</scope>
    <source>
        <strain>Nepal516</strain>
    </source>
</reference>
<proteinExistence type="inferred from homology"/>
<evidence type="ECO:0000255" key="1">
    <source>
        <dbReference type="HAMAP-Rule" id="MF_00389"/>
    </source>
</evidence>
<gene>
    <name evidence="1" type="primary">tusC</name>
    <name type="ordered locus">YPN_3869</name>
    <name type="ORF">YP516_4394</name>
</gene>
<comment type="function">
    <text evidence="1">Part of a sulfur-relay system required for 2-thiolation of 5-methylaminomethyl-2-thiouridine (mnm(5)s(2)U) at tRNA wobble positions.</text>
</comment>
<comment type="subunit">
    <text evidence="1">Heterohexamer, formed by a dimer of trimers. The hexameric TusBCD complex contains 2 copies each of TusB, TusC and TusD. The TusBCD complex interacts with TusE.</text>
</comment>
<comment type="subcellular location">
    <subcellularLocation>
        <location evidence="1">Cytoplasm</location>
    </subcellularLocation>
</comment>
<comment type="similarity">
    <text evidence="1">Belongs to the DsrF/TusC family.</text>
</comment>
<dbReference type="EMBL" id="CP000305">
    <property type="protein sequence ID" value="ABG20196.1"/>
    <property type="molecule type" value="Genomic_DNA"/>
</dbReference>
<dbReference type="EMBL" id="ACNQ01000019">
    <property type="protein sequence ID" value="EEO74784.1"/>
    <property type="molecule type" value="Genomic_DNA"/>
</dbReference>
<dbReference type="RefSeq" id="WP_002212321.1">
    <property type="nucleotide sequence ID" value="NZ_ACNQ01000019.1"/>
</dbReference>
<dbReference type="SMR" id="Q1CCT4"/>
<dbReference type="GeneID" id="57974405"/>
<dbReference type="KEGG" id="ypn:YPN_3869"/>
<dbReference type="HOGENOM" id="CLU_155943_1_0_6"/>
<dbReference type="Proteomes" id="UP000008936">
    <property type="component" value="Chromosome"/>
</dbReference>
<dbReference type="GO" id="GO:0005737">
    <property type="term" value="C:cytoplasm"/>
    <property type="evidence" value="ECO:0007669"/>
    <property type="project" value="UniProtKB-SubCell"/>
</dbReference>
<dbReference type="GO" id="GO:0008033">
    <property type="term" value="P:tRNA processing"/>
    <property type="evidence" value="ECO:0007669"/>
    <property type="project" value="UniProtKB-UniRule"/>
</dbReference>
<dbReference type="Gene3D" id="3.40.1260.10">
    <property type="entry name" value="DsrEFH-like"/>
    <property type="match status" value="1"/>
</dbReference>
<dbReference type="HAMAP" id="MF_00389">
    <property type="entry name" value="Thiourid_synth_C"/>
    <property type="match status" value="1"/>
</dbReference>
<dbReference type="InterPro" id="IPR027396">
    <property type="entry name" value="DsrEFH-like"/>
</dbReference>
<dbReference type="InterPro" id="IPR003787">
    <property type="entry name" value="Sulphur_relay_DsrE/F-like"/>
</dbReference>
<dbReference type="InterPro" id="IPR037450">
    <property type="entry name" value="Sulphur_relay_TusC"/>
</dbReference>
<dbReference type="InterPro" id="IPR017462">
    <property type="entry name" value="Sulphur_relay_TusC/DsrF"/>
</dbReference>
<dbReference type="NCBIfam" id="NF001238">
    <property type="entry name" value="PRK00211.1"/>
    <property type="match status" value="1"/>
</dbReference>
<dbReference type="NCBIfam" id="TIGR03010">
    <property type="entry name" value="sulf_tusC_dsrF"/>
    <property type="match status" value="1"/>
</dbReference>
<dbReference type="PANTHER" id="PTHR38780">
    <property type="entry name" value="PROTEIN TUSC"/>
    <property type="match status" value="1"/>
</dbReference>
<dbReference type="PANTHER" id="PTHR38780:SF1">
    <property type="entry name" value="PROTEIN TUSC"/>
    <property type="match status" value="1"/>
</dbReference>
<dbReference type="Pfam" id="PF02635">
    <property type="entry name" value="DsrE"/>
    <property type="match status" value="1"/>
</dbReference>
<dbReference type="SUPFAM" id="SSF75169">
    <property type="entry name" value="DsrEFH-like"/>
    <property type="match status" value="1"/>
</dbReference>
<sequence length="121" mass="13435">MARKRIAFIFTQGPHGSSAGREGLDALLATSALSEDIGVFFISDGVLQLLPQQQPEKILARNYIATFGVLPLYDVENCYLCERSLQQRGLSKMADWILDVTVLSPADLRRELGTYDVVLTF</sequence>
<keyword id="KW-0963">Cytoplasm</keyword>
<keyword id="KW-0819">tRNA processing</keyword>
<protein>
    <recommendedName>
        <fullName evidence="1">Protein TusC</fullName>
    </recommendedName>
    <alternativeName>
        <fullName evidence="1">tRNA 2-thiouridine synthesizing protein C</fullName>
    </alternativeName>
</protein>
<feature type="chain" id="PRO_1000013248" description="Protein TusC">
    <location>
        <begin position="1"/>
        <end position="121"/>
    </location>
</feature>
<organism>
    <name type="scientific">Yersinia pestis bv. Antiqua (strain Nepal516)</name>
    <dbReference type="NCBI Taxonomy" id="377628"/>
    <lineage>
        <taxon>Bacteria</taxon>
        <taxon>Pseudomonadati</taxon>
        <taxon>Pseudomonadota</taxon>
        <taxon>Gammaproteobacteria</taxon>
        <taxon>Enterobacterales</taxon>
        <taxon>Yersiniaceae</taxon>
        <taxon>Yersinia</taxon>
    </lineage>
</organism>
<name>TUSC_YERPN</name>